<organism>
    <name type="scientific">Bacillus pumilus (strain SAFR-032)</name>
    <dbReference type="NCBI Taxonomy" id="315750"/>
    <lineage>
        <taxon>Bacteria</taxon>
        <taxon>Bacillati</taxon>
        <taxon>Bacillota</taxon>
        <taxon>Bacilli</taxon>
        <taxon>Bacillales</taxon>
        <taxon>Bacillaceae</taxon>
        <taxon>Bacillus</taxon>
    </lineage>
</organism>
<feature type="chain" id="PRO_1000057387" description="Elongation factor G">
    <location>
        <begin position="1"/>
        <end position="692"/>
    </location>
</feature>
<feature type="domain" description="tr-type G">
    <location>
        <begin position="8"/>
        <end position="282"/>
    </location>
</feature>
<feature type="binding site" evidence="1">
    <location>
        <begin position="17"/>
        <end position="24"/>
    </location>
    <ligand>
        <name>GTP</name>
        <dbReference type="ChEBI" id="CHEBI:37565"/>
    </ligand>
</feature>
<feature type="binding site" evidence="1">
    <location>
        <begin position="81"/>
        <end position="85"/>
    </location>
    <ligand>
        <name>GTP</name>
        <dbReference type="ChEBI" id="CHEBI:37565"/>
    </ligand>
</feature>
<feature type="binding site" evidence="1">
    <location>
        <begin position="135"/>
        <end position="138"/>
    </location>
    <ligand>
        <name>GTP</name>
        <dbReference type="ChEBI" id="CHEBI:37565"/>
    </ligand>
</feature>
<keyword id="KW-0963">Cytoplasm</keyword>
<keyword id="KW-0251">Elongation factor</keyword>
<keyword id="KW-0342">GTP-binding</keyword>
<keyword id="KW-0547">Nucleotide-binding</keyword>
<keyword id="KW-0648">Protein biosynthesis</keyword>
<name>EFG_BACP2</name>
<dbReference type="EMBL" id="CP000813">
    <property type="protein sequence ID" value="ABV60798.1"/>
    <property type="molecule type" value="Genomic_DNA"/>
</dbReference>
<dbReference type="RefSeq" id="WP_012008700.1">
    <property type="nucleotide sequence ID" value="NZ_VEIS01000020.1"/>
</dbReference>
<dbReference type="SMR" id="A8F981"/>
<dbReference type="STRING" id="315750.BPUM_0098"/>
<dbReference type="GeneID" id="5619340"/>
<dbReference type="KEGG" id="bpu:BPUM_0098"/>
<dbReference type="eggNOG" id="COG0480">
    <property type="taxonomic scope" value="Bacteria"/>
</dbReference>
<dbReference type="HOGENOM" id="CLU_002794_4_1_9"/>
<dbReference type="OrthoDB" id="9804431at2"/>
<dbReference type="Proteomes" id="UP000001355">
    <property type="component" value="Chromosome"/>
</dbReference>
<dbReference type="GO" id="GO:0005737">
    <property type="term" value="C:cytoplasm"/>
    <property type="evidence" value="ECO:0007669"/>
    <property type="project" value="UniProtKB-SubCell"/>
</dbReference>
<dbReference type="GO" id="GO:0005525">
    <property type="term" value="F:GTP binding"/>
    <property type="evidence" value="ECO:0007669"/>
    <property type="project" value="UniProtKB-UniRule"/>
</dbReference>
<dbReference type="GO" id="GO:0003924">
    <property type="term" value="F:GTPase activity"/>
    <property type="evidence" value="ECO:0007669"/>
    <property type="project" value="InterPro"/>
</dbReference>
<dbReference type="GO" id="GO:0003746">
    <property type="term" value="F:translation elongation factor activity"/>
    <property type="evidence" value="ECO:0007669"/>
    <property type="project" value="UniProtKB-UniRule"/>
</dbReference>
<dbReference type="GO" id="GO:0032790">
    <property type="term" value="P:ribosome disassembly"/>
    <property type="evidence" value="ECO:0007669"/>
    <property type="project" value="TreeGrafter"/>
</dbReference>
<dbReference type="CDD" id="cd01886">
    <property type="entry name" value="EF-G"/>
    <property type="match status" value="1"/>
</dbReference>
<dbReference type="CDD" id="cd16262">
    <property type="entry name" value="EFG_III"/>
    <property type="match status" value="1"/>
</dbReference>
<dbReference type="CDD" id="cd01434">
    <property type="entry name" value="EFG_mtEFG1_IV"/>
    <property type="match status" value="1"/>
</dbReference>
<dbReference type="CDD" id="cd03713">
    <property type="entry name" value="EFG_mtEFG_C"/>
    <property type="match status" value="1"/>
</dbReference>
<dbReference type="CDD" id="cd04088">
    <property type="entry name" value="EFG_mtEFG_II"/>
    <property type="match status" value="1"/>
</dbReference>
<dbReference type="FunFam" id="2.40.30.10:FF:000006">
    <property type="entry name" value="Elongation factor G"/>
    <property type="match status" value="1"/>
</dbReference>
<dbReference type="FunFam" id="3.30.230.10:FF:000003">
    <property type="entry name" value="Elongation factor G"/>
    <property type="match status" value="1"/>
</dbReference>
<dbReference type="FunFam" id="3.30.70.240:FF:000001">
    <property type="entry name" value="Elongation factor G"/>
    <property type="match status" value="1"/>
</dbReference>
<dbReference type="FunFam" id="3.30.70.870:FF:000001">
    <property type="entry name" value="Elongation factor G"/>
    <property type="match status" value="1"/>
</dbReference>
<dbReference type="FunFam" id="3.40.50.300:FF:000029">
    <property type="entry name" value="Elongation factor G"/>
    <property type="match status" value="1"/>
</dbReference>
<dbReference type="Gene3D" id="3.30.230.10">
    <property type="match status" value="1"/>
</dbReference>
<dbReference type="Gene3D" id="3.30.70.240">
    <property type="match status" value="1"/>
</dbReference>
<dbReference type="Gene3D" id="3.30.70.870">
    <property type="entry name" value="Elongation Factor G (Translational Gtpase), domain 3"/>
    <property type="match status" value="1"/>
</dbReference>
<dbReference type="Gene3D" id="3.40.50.300">
    <property type="entry name" value="P-loop containing nucleotide triphosphate hydrolases"/>
    <property type="match status" value="1"/>
</dbReference>
<dbReference type="Gene3D" id="2.40.30.10">
    <property type="entry name" value="Translation factors"/>
    <property type="match status" value="1"/>
</dbReference>
<dbReference type="HAMAP" id="MF_00054_B">
    <property type="entry name" value="EF_G_EF_2_B"/>
    <property type="match status" value="1"/>
</dbReference>
<dbReference type="InterPro" id="IPR041095">
    <property type="entry name" value="EFG_II"/>
</dbReference>
<dbReference type="InterPro" id="IPR009022">
    <property type="entry name" value="EFG_III"/>
</dbReference>
<dbReference type="InterPro" id="IPR035647">
    <property type="entry name" value="EFG_III/V"/>
</dbReference>
<dbReference type="InterPro" id="IPR047872">
    <property type="entry name" value="EFG_IV"/>
</dbReference>
<dbReference type="InterPro" id="IPR035649">
    <property type="entry name" value="EFG_V"/>
</dbReference>
<dbReference type="InterPro" id="IPR000640">
    <property type="entry name" value="EFG_V-like"/>
</dbReference>
<dbReference type="InterPro" id="IPR004161">
    <property type="entry name" value="EFTu-like_2"/>
</dbReference>
<dbReference type="InterPro" id="IPR031157">
    <property type="entry name" value="G_TR_CS"/>
</dbReference>
<dbReference type="InterPro" id="IPR027417">
    <property type="entry name" value="P-loop_NTPase"/>
</dbReference>
<dbReference type="InterPro" id="IPR020568">
    <property type="entry name" value="Ribosomal_Su5_D2-typ_SF"/>
</dbReference>
<dbReference type="InterPro" id="IPR014721">
    <property type="entry name" value="Ribsml_uS5_D2-typ_fold_subgr"/>
</dbReference>
<dbReference type="InterPro" id="IPR005225">
    <property type="entry name" value="Small_GTP-bd"/>
</dbReference>
<dbReference type="InterPro" id="IPR000795">
    <property type="entry name" value="T_Tr_GTP-bd_dom"/>
</dbReference>
<dbReference type="InterPro" id="IPR009000">
    <property type="entry name" value="Transl_B-barrel_sf"/>
</dbReference>
<dbReference type="InterPro" id="IPR004540">
    <property type="entry name" value="Transl_elong_EFG/EF2"/>
</dbReference>
<dbReference type="InterPro" id="IPR005517">
    <property type="entry name" value="Transl_elong_EFG/EF2_IV"/>
</dbReference>
<dbReference type="NCBIfam" id="TIGR00484">
    <property type="entry name" value="EF-G"/>
    <property type="match status" value="1"/>
</dbReference>
<dbReference type="NCBIfam" id="NF009379">
    <property type="entry name" value="PRK12740.1-3"/>
    <property type="match status" value="1"/>
</dbReference>
<dbReference type="NCBIfam" id="NF009381">
    <property type="entry name" value="PRK12740.1-5"/>
    <property type="match status" value="1"/>
</dbReference>
<dbReference type="NCBIfam" id="TIGR00231">
    <property type="entry name" value="small_GTP"/>
    <property type="match status" value="1"/>
</dbReference>
<dbReference type="PANTHER" id="PTHR43261:SF1">
    <property type="entry name" value="RIBOSOME-RELEASING FACTOR 2, MITOCHONDRIAL"/>
    <property type="match status" value="1"/>
</dbReference>
<dbReference type="PANTHER" id="PTHR43261">
    <property type="entry name" value="TRANSLATION ELONGATION FACTOR G-RELATED"/>
    <property type="match status" value="1"/>
</dbReference>
<dbReference type="Pfam" id="PF00679">
    <property type="entry name" value="EFG_C"/>
    <property type="match status" value="1"/>
</dbReference>
<dbReference type="Pfam" id="PF14492">
    <property type="entry name" value="EFG_III"/>
    <property type="match status" value="1"/>
</dbReference>
<dbReference type="Pfam" id="PF03764">
    <property type="entry name" value="EFG_IV"/>
    <property type="match status" value="1"/>
</dbReference>
<dbReference type="Pfam" id="PF00009">
    <property type="entry name" value="GTP_EFTU"/>
    <property type="match status" value="1"/>
</dbReference>
<dbReference type="Pfam" id="PF03144">
    <property type="entry name" value="GTP_EFTU_D2"/>
    <property type="match status" value="1"/>
</dbReference>
<dbReference type="PRINTS" id="PR00315">
    <property type="entry name" value="ELONGATNFCT"/>
</dbReference>
<dbReference type="SMART" id="SM00838">
    <property type="entry name" value="EFG_C"/>
    <property type="match status" value="1"/>
</dbReference>
<dbReference type="SMART" id="SM00889">
    <property type="entry name" value="EFG_IV"/>
    <property type="match status" value="1"/>
</dbReference>
<dbReference type="SUPFAM" id="SSF54980">
    <property type="entry name" value="EF-G C-terminal domain-like"/>
    <property type="match status" value="2"/>
</dbReference>
<dbReference type="SUPFAM" id="SSF52540">
    <property type="entry name" value="P-loop containing nucleoside triphosphate hydrolases"/>
    <property type="match status" value="1"/>
</dbReference>
<dbReference type="SUPFAM" id="SSF54211">
    <property type="entry name" value="Ribosomal protein S5 domain 2-like"/>
    <property type="match status" value="1"/>
</dbReference>
<dbReference type="SUPFAM" id="SSF50447">
    <property type="entry name" value="Translation proteins"/>
    <property type="match status" value="1"/>
</dbReference>
<dbReference type="PROSITE" id="PS00301">
    <property type="entry name" value="G_TR_1"/>
    <property type="match status" value="1"/>
</dbReference>
<dbReference type="PROSITE" id="PS51722">
    <property type="entry name" value="G_TR_2"/>
    <property type="match status" value="1"/>
</dbReference>
<accession>A8F981</accession>
<evidence type="ECO:0000255" key="1">
    <source>
        <dbReference type="HAMAP-Rule" id="MF_00054"/>
    </source>
</evidence>
<sequence length="692" mass="76470">MAREFSLDKTRNIGIMAHIDAGKTTTTERILYYTGRIHKIGETHEGASQMDWMEQEQERGITITSAATTAQWKGYRVNIIDTPGHVDFTVEVERSLRVLDGAVAVLDAQSGVEPQTETVWRQATTYGVPRIVFVNKMDKTGADFLYSVSTLRDRLQANAHAIQLPIGAEDQFEGIIDLVDNVAYFYEDDLGTRSDAQEIPAEYKDKAEELRNSLIEAVAELDEELMEKYLEGEEITIPELKAAIRKGTLNVEFYPVLVGSAFKNKGVQLVLDAVLDYLPAPTDVAAIKGILPDSNEEVVRESTDDAPFSALAFKVMTDPYVGKLTFFRVYSGTLASGSYVKNSSKNKRERVGRILQMHANSREEISTVYAGDIAAAVGLKDTSTGDTLCDEKDTVILESMEFPEPVIDVAIEPKSKADQDKMGIALAKLAEEDPTFRTQTNPETGQTIISGMGELHLDIIVDRMKREFKVEANVGAPQVAYRETFRSGAKVEGKFVRQSGGRGQFGHVWIEFEPNEEGAGFEFENAIVGGVVPREYIPAIQAGLEDSLENGVLAGFPLIDIKAKLFDGSYHDVDSNEMAFKIAASMALKNAVSKCNPVLLEPMMKVEVVIPEEYMGDIMGDITSRRGRVEGMEARGNAQVVRAMVPLSEMFGYATSLRSNTQGRGTFTMHMDHYEEVPKSISEEIIKKNKGE</sequence>
<protein>
    <recommendedName>
        <fullName evidence="1">Elongation factor G</fullName>
        <shortName evidence="1">EF-G</shortName>
    </recommendedName>
</protein>
<gene>
    <name evidence="1" type="primary">fusA</name>
    <name type="ordered locus">BPUM_0098</name>
</gene>
<comment type="function">
    <text evidence="1">Catalyzes the GTP-dependent ribosomal translocation step during translation elongation. During this step, the ribosome changes from the pre-translocational (PRE) to the post-translocational (POST) state as the newly formed A-site-bound peptidyl-tRNA and P-site-bound deacylated tRNA move to the P and E sites, respectively. Catalyzes the coordinated movement of the two tRNA molecules, the mRNA and conformational changes in the ribosome.</text>
</comment>
<comment type="subcellular location">
    <subcellularLocation>
        <location evidence="1">Cytoplasm</location>
    </subcellularLocation>
</comment>
<comment type="similarity">
    <text evidence="1">Belongs to the TRAFAC class translation factor GTPase superfamily. Classic translation factor GTPase family. EF-G/EF-2 subfamily.</text>
</comment>
<reference key="1">
    <citation type="journal article" date="2007" name="PLoS ONE">
        <title>Paradoxical DNA repair and peroxide resistance gene conservation in Bacillus pumilus SAFR-032.</title>
        <authorList>
            <person name="Gioia J."/>
            <person name="Yerrapragada S."/>
            <person name="Qin X."/>
            <person name="Jiang H."/>
            <person name="Igboeli O.C."/>
            <person name="Muzny D."/>
            <person name="Dugan-Rocha S."/>
            <person name="Ding Y."/>
            <person name="Hawes A."/>
            <person name="Liu W."/>
            <person name="Perez L."/>
            <person name="Kovar C."/>
            <person name="Dinh H."/>
            <person name="Lee S."/>
            <person name="Nazareth L."/>
            <person name="Blyth P."/>
            <person name="Holder M."/>
            <person name="Buhay C."/>
            <person name="Tirumalai M.R."/>
            <person name="Liu Y."/>
            <person name="Dasgupta I."/>
            <person name="Bokhetache L."/>
            <person name="Fujita M."/>
            <person name="Karouia F."/>
            <person name="Eswara Moorthy P."/>
            <person name="Siefert J."/>
            <person name="Uzman A."/>
            <person name="Buzumbo P."/>
            <person name="Verma A."/>
            <person name="Zwiya H."/>
            <person name="McWilliams B.D."/>
            <person name="Olowu A."/>
            <person name="Clinkenbeard K.D."/>
            <person name="Newcombe D."/>
            <person name="Golebiewski L."/>
            <person name="Petrosino J.F."/>
            <person name="Nicholson W.L."/>
            <person name="Fox G.E."/>
            <person name="Venkateswaran K."/>
            <person name="Highlander S.K."/>
            <person name="Weinstock G.M."/>
        </authorList>
    </citation>
    <scope>NUCLEOTIDE SEQUENCE [LARGE SCALE GENOMIC DNA]</scope>
    <source>
        <strain>SAFR-032</strain>
    </source>
</reference>
<proteinExistence type="inferred from homology"/>